<proteinExistence type="inferred from homology"/>
<sequence>MRVLVHVNNAKQSGDGANNSNGTLINYNSNNKLFLEIHPNQSIWMIKTLLFNLFQIPPARQQLYLKVVDEINPRETSKAYSKLLQSYRLVKDYKIYEGTELQMVALEKEIPSEFLVPPKKTQSNSMEKLPHFTNLSMSSMSNMDEILSGSGGGRIHVLSSKKGEECPALCFAVGKGLYRGISGVIYEIKLYRVDSKGMLIVNTSLNFQIDVIKKDSISVEDRKMAFTYEQRKSDYSLLKLQPIIYGEYSISIKIDDTPICGSPFHCTIIDELNPNLKELAFSNEWIEEVVQLITLMSNKPSTIDKLFSFGIEGLMNLMFYPDPTIQIHIIGIFAKLIEKDKNKERVLKEFGMDFIFKLVSLDNWSNFMELRKLVASSLCILSCYKPFLNRFFKEVGIDVISLIARSDFIDCPRSCAIFLSRVSEISFELNEYLISDSIKETLIYLLSIQDNITVNCTLKTISNLSSSFDLKKESNIKLLSNLLEYCKEFQEISKKVLIFKSFSNFCVNESLCTFLISNGILDLITPTHDKSGYFGIPMFCQWESNTINYIISNNNEINLKQYGYEFNQIFKEETDYVFFLSLTISNMLVSTTSLKIHDHFSRGNGLNLLKQFIICHECSVRSEAFRSFMIISNSPNDQCKKHLIQSGIIPYLVSSLFDSLSVETPFIVNTLANLCKYDPTCVENMGVDDIDKFIELLHRDSTSSLSKSISYILSHLIRHDKYKQRIVNGGGKLFLQYLIEFVRQGEISVLKYISQSDLELTKEIGRGVSGVVKRGKWKGYEIAVKQFNEEELGFSEREFHSEATIMSVLRHDNIVHCVGGSAQPGKMYLVCDYYSRGSLYSVITANICPLSNARIVHLALQVAKGMNYLHSLGIIHRDLKPGNLLIDQDWNIRISDFGLSRVVDNRMTKTVGTPCYMAVEVLKGLTDYSQQADVYSFAFVLWECISRQIPYKDFAQIQWISMVLEDSFRPPIPDSCLPEFRDLITMCWTSNPDDRPSFQQIITYLENLRLKMQDQGIYQILTGGSSVGIGGVGVVGVGSGGNSDEHESNIDIDTVSGSNNNESSTAVSLNENKINIDMSMHPTEELKNLVEVSKDDNPTNSDYDIRSSSTSSSPSTLSAPQSPVGSTSPMGSTSTSPISNNNNRPTHDHQQPHQVKWERIVPDKPNPNLKSKRLSAFRNKAVPISITDNNNNNNSANNNNNNNSMKNNSNASRNTFSSVSSPSSSADLSSGIESSNNRDDSFLSSGSSLSEQHRSVSNSVSNSVGGFSLPPPPLAPSFYASMINEKISSSTPTDNNNNNNNNNNNNNNNNNNNNNNNNNNNNNNNNNNSNNSINNNNNNGIAINYTNSINNNKNSNNNTSNTKYPISKCKSNPSFEALKSKFDKD</sequence>
<organism>
    <name type="scientific">Dictyostelium discoideum</name>
    <name type="common">Social amoeba</name>
    <dbReference type="NCBI Taxonomy" id="44689"/>
    <lineage>
        <taxon>Eukaryota</taxon>
        <taxon>Amoebozoa</taxon>
        <taxon>Evosea</taxon>
        <taxon>Eumycetozoa</taxon>
        <taxon>Dictyostelia</taxon>
        <taxon>Dictyosteliales</taxon>
        <taxon>Dictyosteliaceae</taxon>
        <taxon>Dictyostelium</taxon>
    </lineage>
</organism>
<protein>
    <recommendedName>
        <fullName>Probable serine/threonine-protein kinase DDB_G0268876</fullName>
        <ecNumber>2.7.11.1</ecNumber>
    </recommendedName>
</protein>
<comment type="catalytic activity">
    <reaction>
        <text>L-seryl-[protein] + ATP = O-phospho-L-seryl-[protein] + ADP + H(+)</text>
        <dbReference type="Rhea" id="RHEA:17989"/>
        <dbReference type="Rhea" id="RHEA-COMP:9863"/>
        <dbReference type="Rhea" id="RHEA-COMP:11604"/>
        <dbReference type="ChEBI" id="CHEBI:15378"/>
        <dbReference type="ChEBI" id="CHEBI:29999"/>
        <dbReference type="ChEBI" id="CHEBI:30616"/>
        <dbReference type="ChEBI" id="CHEBI:83421"/>
        <dbReference type="ChEBI" id="CHEBI:456216"/>
        <dbReference type="EC" id="2.7.11.1"/>
    </reaction>
</comment>
<comment type="catalytic activity">
    <reaction>
        <text>L-threonyl-[protein] + ATP = O-phospho-L-threonyl-[protein] + ADP + H(+)</text>
        <dbReference type="Rhea" id="RHEA:46608"/>
        <dbReference type="Rhea" id="RHEA-COMP:11060"/>
        <dbReference type="Rhea" id="RHEA-COMP:11605"/>
        <dbReference type="ChEBI" id="CHEBI:15378"/>
        <dbReference type="ChEBI" id="CHEBI:30013"/>
        <dbReference type="ChEBI" id="CHEBI:30616"/>
        <dbReference type="ChEBI" id="CHEBI:61977"/>
        <dbReference type="ChEBI" id="CHEBI:456216"/>
        <dbReference type="EC" id="2.7.11.1"/>
    </reaction>
</comment>
<comment type="similarity">
    <text evidence="4">Belongs to the protein kinase superfamily. TKL Ser/Thr protein kinase family.</text>
</comment>
<name>Y9956_DICDI</name>
<accession>Q55EI8</accession>
<reference key="1">
    <citation type="journal article" date="2005" name="Nature">
        <title>The genome of the social amoeba Dictyostelium discoideum.</title>
        <authorList>
            <person name="Eichinger L."/>
            <person name="Pachebat J.A."/>
            <person name="Gloeckner G."/>
            <person name="Rajandream M.A."/>
            <person name="Sucgang R."/>
            <person name="Berriman M."/>
            <person name="Song J."/>
            <person name="Olsen R."/>
            <person name="Szafranski K."/>
            <person name="Xu Q."/>
            <person name="Tunggal B."/>
            <person name="Kummerfeld S."/>
            <person name="Madera M."/>
            <person name="Konfortov B.A."/>
            <person name="Rivero F."/>
            <person name="Bankier A.T."/>
            <person name="Lehmann R."/>
            <person name="Hamlin N."/>
            <person name="Davies R."/>
            <person name="Gaudet P."/>
            <person name="Fey P."/>
            <person name="Pilcher K."/>
            <person name="Chen G."/>
            <person name="Saunders D."/>
            <person name="Sodergren E.J."/>
            <person name="Davis P."/>
            <person name="Kerhornou A."/>
            <person name="Nie X."/>
            <person name="Hall N."/>
            <person name="Anjard C."/>
            <person name="Hemphill L."/>
            <person name="Bason N."/>
            <person name="Farbrother P."/>
            <person name="Desany B."/>
            <person name="Just E."/>
            <person name="Morio T."/>
            <person name="Rost R."/>
            <person name="Churcher C.M."/>
            <person name="Cooper J."/>
            <person name="Haydock S."/>
            <person name="van Driessche N."/>
            <person name="Cronin A."/>
            <person name="Goodhead I."/>
            <person name="Muzny D.M."/>
            <person name="Mourier T."/>
            <person name="Pain A."/>
            <person name="Lu M."/>
            <person name="Harper D."/>
            <person name="Lindsay R."/>
            <person name="Hauser H."/>
            <person name="James K.D."/>
            <person name="Quiles M."/>
            <person name="Madan Babu M."/>
            <person name="Saito T."/>
            <person name="Buchrieser C."/>
            <person name="Wardroper A."/>
            <person name="Felder M."/>
            <person name="Thangavelu M."/>
            <person name="Johnson D."/>
            <person name="Knights A."/>
            <person name="Loulseged H."/>
            <person name="Mungall K.L."/>
            <person name="Oliver K."/>
            <person name="Price C."/>
            <person name="Quail M.A."/>
            <person name="Urushihara H."/>
            <person name="Hernandez J."/>
            <person name="Rabbinowitsch E."/>
            <person name="Steffen D."/>
            <person name="Sanders M."/>
            <person name="Ma J."/>
            <person name="Kohara Y."/>
            <person name="Sharp S."/>
            <person name="Simmonds M.N."/>
            <person name="Spiegler S."/>
            <person name="Tivey A."/>
            <person name="Sugano S."/>
            <person name="White B."/>
            <person name="Walker D."/>
            <person name="Woodward J.R."/>
            <person name="Winckler T."/>
            <person name="Tanaka Y."/>
            <person name="Shaulsky G."/>
            <person name="Schleicher M."/>
            <person name="Weinstock G.M."/>
            <person name="Rosenthal A."/>
            <person name="Cox E.C."/>
            <person name="Chisholm R.L."/>
            <person name="Gibbs R.A."/>
            <person name="Loomis W.F."/>
            <person name="Platzer M."/>
            <person name="Kay R.R."/>
            <person name="Williams J.G."/>
            <person name="Dear P.H."/>
            <person name="Noegel A.A."/>
            <person name="Barrell B.G."/>
            <person name="Kuspa A."/>
        </authorList>
    </citation>
    <scope>NUCLEOTIDE SEQUENCE [LARGE SCALE GENOMIC DNA]</scope>
    <source>
        <strain>AX4</strain>
    </source>
</reference>
<gene>
    <name type="ORF">DDB_G0268876</name>
</gene>
<dbReference type="EC" id="2.7.11.1"/>
<dbReference type="EMBL" id="AAFI02000004">
    <property type="protein sequence ID" value="EAL73027.1"/>
    <property type="molecule type" value="Genomic_DNA"/>
</dbReference>
<dbReference type="RefSeq" id="XP_647032.1">
    <property type="nucleotide sequence ID" value="XM_641940.1"/>
</dbReference>
<dbReference type="FunCoup" id="Q55EI8">
    <property type="interactions" value="273"/>
</dbReference>
<dbReference type="PaxDb" id="44689-DDB0229956"/>
<dbReference type="EnsemblProtists" id="EAL73027">
    <property type="protein sequence ID" value="EAL73027"/>
    <property type="gene ID" value="DDB_G0268876"/>
</dbReference>
<dbReference type="GeneID" id="8616727"/>
<dbReference type="KEGG" id="ddi:DDB_G0268876"/>
<dbReference type="dictyBase" id="DDB_G0268876"/>
<dbReference type="VEuPathDB" id="AmoebaDB:DDB_G0268876"/>
<dbReference type="eggNOG" id="KOG0192">
    <property type="taxonomic scope" value="Eukaryota"/>
</dbReference>
<dbReference type="HOGENOM" id="CLU_255347_0_0_1"/>
<dbReference type="InParanoid" id="Q55EI8"/>
<dbReference type="OMA" id="CTIIDEL"/>
<dbReference type="Reactome" id="R-DDI-5673000">
    <property type="pathway name" value="RAF activation"/>
</dbReference>
<dbReference type="Reactome" id="R-DDI-5675221">
    <property type="pathway name" value="Negative regulation of MAPK pathway"/>
</dbReference>
<dbReference type="PRO" id="PR:Q55EI8"/>
<dbReference type="Proteomes" id="UP000002195">
    <property type="component" value="Chromosome 1"/>
</dbReference>
<dbReference type="GO" id="GO:0005737">
    <property type="term" value="C:cytoplasm"/>
    <property type="evidence" value="ECO:0000318"/>
    <property type="project" value="GO_Central"/>
</dbReference>
<dbReference type="GO" id="GO:0005524">
    <property type="term" value="F:ATP binding"/>
    <property type="evidence" value="ECO:0007669"/>
    <property type="project" value="UniProtKB-KW"/>
</dbReference>
<dbReference type="GO" id="GO:0004672">
    <property type="term" value="F:protein kinase activity"/>
    <property type="evidence" value="ECO:0000318"/>
    <property type="project" value="GO_Central"/>
</dbReference>
<dbReference type="GO" id="GO:0106310">
    <property type="term" value="F:protein serine kinase activity"/>
    <property type="evidence" value="ECO:0007669"/>
    <property type="project" value="RHEA"/>
</dbReference>
<dbReference type="GO" id="GO:0004674">
    <property type="term" value="F:protein serine/threonine kinase activity"/>
    <property type="evidence" value="ECO:0007669"/>
    <property type="project" value="UniProtKB-KW"/>
</dbReference>
<dbReference type="GO" id="GO:0007165">
    <property type="term" value="P:signal transduction"/>
    <property type="evidence" value="ECO:0000318"/>
    <property type="project" value="GO_Central"/>
</dbReference>
<dbReference type="CDD" id="cd13999">
    <property type="entry name" value="STKc_MAP3K-like"/>
    <property type="match status" value="1"/>
</dbReference>
<dbReference type="CDD" id="cd17039">
    <property type="entry name" value="Ubl_ubiquitin_like"/>
    <property type="match status" value="1"/>
</dbReference>
<dbReference type="Gene3D" id="2.60.40.10">
    <property type="entry name" value="Immunoglobulins"/>
    <property type="match status" value="1"/>
</dbReference>
<dbReference type="Gene3D" id="1.25.10.10">
    <property type="entry name" value="Leucine-rich Repeat Variant"/>
    <property type="match status" value="2"/>
</dbReference>
<dbReference type="Gene3D" id="3.30.200.20">
    <property type="entry name" value="Phosphorylase Kinase, domain 1"/>
    <property type="match status" value="1"/>
</dbReference>
<dbReference type="Gene3D" id="1.10.510.10">
    <property type="entry name" value="Transferase(Phosphotransferase) domain 1"/>
    <property type="match status" value="1"/>
</dbReference>
<dbReference type="InterPro" id="IPR011989">
    <property type="entry name" value="ARM-like"/>
</dbReference>
<dbReference type="InterPro" id="IPR016024">
    <property type="entry name" value="ARM-type_fold"/>
</dbReference>
<dbReference type="InterPro" id="IPR017868">
    <property type="entry name" value="Filamin/ABP280_repeat-like"/>
</dbReference>
<dbReference type="InterPro" id="IPR013783">
    <property type="entry name" value="Ig-like_fold"/>
</dbReference>
<dbReference type="InterPro" id="IPR014756">
    <property type="entry name" value="Ig_E-set"/>
</dbReference>
<dbReference type="InterPro" id="IPR011009">
    <property type="entry name" value="Kinase-like_dom_sf"/>
</dbReference>
<dbReference type="InterPro" id="IPR000719">
    <property type="entry name" value="Prot_kinase_dom"/>
</dbReference>
<dbReference type="InterPro" id="IPR017441">
    <property type="entry name" value="Protein_kinase_ATP_BS"/>
</dbReference>
<dbReference type="InterPro" id="IPR001245">
    <property type="entry name" value="Ser-Thr/Tyr_kinase_cat_dom"/>
</dbReference>
<dbReference type="InterPro" id="IPR008271">
    <property type="entry name" value="Ser/Thr_kinase_AS"/>
</dbReference>
<dbReference type="InterPro" id="IPR051681">
    <property type="entry name" value="Ser/Thr_Kinases-Pseudokinases"/>
</dbReference>
<dbReference type="InterPro" id="IPR029071">
    <property type="entry name" value="Ubiquitin-like_domsf"/>
</dbReference>
<dbReference type="PANTHER" id="PTHR44329">
    <property type="entry name" value="SERINE/THREONINE-PROTEIN KINASE TNNI3K-RELATED"/>
    <property type="match status" value="1"/>
</dbReference>
<dbReference type="Pfam" id="PF07714">
    <property type="entry name" value="PK_Tyr_Ser-Thr"/>
    <property type="match status" value="1"/>
</dbReference>
<dbReference type="PRINTS" id="PR00109">
    <property type="entry name" value="TYRKINASE"/>
</dbReference>
<dbReference type="SMART" id="SM00220">
    <property type="entry name" value="S_TKc"/>
    <property type="match status" value="1"/>
</dbReference>
<dbReference type="SUPFAM" id="SSF48371">
    <property type="entry name" value="ARM repeat"/>
    <property type="match status" value="1"/>
</dbReference>
<dbReference type="SUPFAM" id="SSF81296">
    <property type="entry name" value="E set domains"/>
    <property type="match status" value="1"/>
</dbReference>
<dbReference type="SUPFAM" id="SSF56112">
    <property type="entry name" value="Protein kinase-like (PK-like)"/>
    <property type="match status" value="1"/>
</dbReference>
<dbReference type="SUPFAM" id="SSF54236">
    <property type="entry name" value="Ubiquitin-like"/>
    <property type="match status" value="1"/>
</dbReference>
<dbReference type="PROSITE" id="PS00107">
    <property type="entry name" value="PROTEIN_KINASE_ATP"/>
    <property type="match status" value="1"/>
</dbReference>
<dbReference type="PROSITE" id="PS50011">
    <property type="entry name" value="PROTEIN_KINASE_DOM"/>
    <property type="match status" value="1"/>
</dbReference>
<dbReference type="PROSITE" id="PS00108">
    <property type="entry name" value="PROTEIN_KINASE_ST"/>
    <property type="match status" value="1"/>
</dbReference>
<keyword id="KW-0067">ATP-binding</keyword>
<keyword id="KW-0418">Kinase</keyword>
<keyword id="KW-0547">Nucleotide-binding</keyword>
<keyword id="KW-1185">Reference proteome</keyword>
<keyword id="KW-0723">Serine/threonine-protein kinase</keyword>
<keyword id="KW-0808">Transferase</keyword>
<evidence type="ECO:0000255" key="1">
    <source>
        <dbReference type="PROSITE-ProRule" id="PRU00159"/>
    </source>
</evidence>
<evidence type="ECO:0000255" key="2">
    <source>
        <dbReference type="PROSITE-ProRule" id="PRU10027"/>
    </source>
</evidence>
<evidence type="ECO:0000256" key="3">
    <source>
        <dbReference type="SAM" id="MobiDB-lite"/>
    </source>
</evidence>
<evidence type="ECO:0000305" key="4"/>
<feature type="chain" id="PRO_0000355168" description="Probable serine/threonine-protein kinase DDB_G0268876">
    <location>
        <begin position="1"/>
        <end position="1385"/>
    </location>
</feature>
<feature type="domain" description="Protein kinase" evidence="1">
    <location>
        <begin position="758"/>
        <end position="1008"/>
    </location>
</feature>
<feature type="region of interest" description="Disordered" evidence="3">
    <location>
        <begin position="1040"/>
        <end position="1074"/>
    </location>
</feature>
<feature type="region of interest" description="Disordered" evidence="3">
    <location>
        <begin position="1091"/>
        <end position="1266"/>
    </location>
</feature>
<feature type="region of interest" description="Disordered" evidence="3">
    <location>
        <begin position="1287"/>
        <end position="1339"/>
    </location>
</feature>
<feature type="compositionally biased region" description="Polar residues" evidence="3">
    <location>
        <begin position="1055"/>
        <end position="1073"/>
    </location>
</feature>
<feature type="compositionally biased region" description="Low complexity" evidence="3">
    <location>
        <begin position="1107"/>
        <end position="1144"/>
    </location>
</feature>
<feature type="compositionally biased region" description="Basic and acidic residues" evidence="3">
    <location>
        <begin position="1145"/>
        <end position="1162"/>
    </location>
</feature>
<feature type="compositionally biased region" description="Low complexity" evidence="3">
    <location>
        <begin position="1189"/>
        <end position="1232"/>
    </location>
</feature>
<feature type="compositionally biased region" description="Low complexity" evidence="3">
    <location>
        <begin position="1242"/>
        <end position="1266"/>
    </location>
</feature>
<feature type="compositionally biased region" description="Low complexity" evidence="3">
    <location>
        <begin position="1295"/>
        <end position="1339"/>
    </location>
</feature>
<feature type="active site" description="Proton acceptor" evidence="1 2">
    <location>
        <position position="878"/>
    </location>
</feature>
<feature type="binding site" evidence="1">
    <location>
        <begin position="764"/>
        <end position="772"/>
    </location>
    <ligand>
        <name>ATP</name>
        <dbReference type="ChEBI" id="CHEBI:30616"/>
    </ligand>
</feature>
<feature type="binding site" evidence="1">
    <location>
        <position position="785"/>
    </location>
    <ligand>
        <name>ATP</name>
        <dbReference type="ChEBI" id="CHEBI:30616"/>
    </ligand>
</feature>